<protein>
    <recommendedName>
        <fullName evidence="1">Biotin synthase</fullName>
        <ecNumber evidence="1">2.8.1.6</ecNumber>
    </recommendedName>
</protein>
<dbReference type="EC" id="2.8.1.6" evidence="1"/>
<dbReference type="EMBL" id="CP001196">
    <property type="protein sequence ID" value="ACI91849.1"/>
    <property type="molecule type" value="Genomic_DNA"/>
</dbReference>
<dbReference type="EMBL" id="CP002826">
    <property type="protein sequence ID" value="AEI07919.1"/>
    <property type="molecule type" value="Genomic_DNA"/>
</dbReference>
<dbReference type="RefSeq" id="WP_012561879.1">
    <property type="nucleotide sequence ID" value="NC_011386.1"/>
</dbReference>
<dbReference type="SMR" id="B6JDD7"/>
<dbReference type="STRING" id="504832.OCA5_c32430"/>
<dbReference type="KEGG" id="oca:OCAR_4707"/>
<dbReference type="KEGG" id="ocg:OCA5_c32430"/>
<dbReference type="PATRIC" id="fig|504832.7.peg.3409"/>
<dbReference type="eggNOG" id="COG0502">
    <property type="taxonomic scope" value="Bacteria"/>
</dbReference>
<dbReference type="HOGENOM" id="CLU_033172_1_2_5"/>
<dbReference type="OrthoDB" id="9786826at2"/>
<dbReference type="UniPathway" id="UPA00078">
    <property type="reaction ID" value="UER00162"/>
</dbReference>
<dbReference type="Proteomes" id="UP000007730">
    <property type="component" value="Chromosome"/>
</dbReference>
<dbReference type="GO" id="GO:0051537">
    <property type="term" value="F:2 iron, 2 sulfur cluster binding"/>
    <property type="evidence" value="ECO:0007669"/>
    <property type="project" value="UniProtKB-KW"/>
</dbReference>
<dbReference type="GO" id="GO:0051539">
    <property type="term" value="F:4 iron, 4 sulfur cluster binding"/>
    <property type="evidence" value="ECO:0007669"/>
    <property type="project" value="UniProtKB-KW"/>
</dbReference>
<dbReference type="GO" id="GO:0004076">
    <property type="term" value="F:biotin synthase activity"/>
    <property type="evidence" value="ECO:0007669"/>
    <property type="project" value="UniProtKB-UniRule"/>
</dbReference>
<dbReference type="GO" id="GO:0005506">
    <property type="term" value="F:iron ion binding"/>
    <property type="evidence" value="ECO:0007669"/>
    <property type="project" value="UniProtKB-UniRule"/>
</dbReference>
<dbReference type="GO" id="GO:0009102">
    <property type="term" value="P:biotin biosynthetic process"/>
    <property type="evidence" value="ECO:0007669"/>
    <property type="project" value="UniProtKB-UniRule"/>
</dbReference>
<dbReference type="CDD" id="cd01335">
    <property type="entry name" value="Radical_SAM"/>
    <property type="match status" value="1"/>
</dbReference>
<dbReference type="FunFam" id="3.20.20.70:FF:000026">
    <property type="entry name" value="Biotin synthase"/>
    <property type="match status" value="1"/>
</dbReference>
<dbReference type="Gene3D" id="3.20.20.70">
    <property type="entry name" value="Aldolase class I"/>
    <property type="match status" value="1"/>
</dbReference>
<dbReference type="HAMAP" id="MF_01694">
    <property type="entry name" value="BioB"/>
    <property type="match status" value="1"/>
</dbReference>
<dbReference type="InterPro" id="IPR013785">
    <property type="entry name" value="Aldolase_TIM"/>
</dbReference>
<dbReference type="InterPro" id="IPR010722">
    <property type="entry name" value="BATS_dom"/>
</dbReference>
<dbReference type="InterPro" id="IPR002684">
    <property type="entry name" value="Biotin_synth/BioAB"/>
</dbReference>
<dbReference type="InterPro" id="IPR024177">
    <property type="entry name" value="Biotin_synthase"/>
</dbReference>
<dbReference type="InterPro" id="IPR006638">
    <property type="entry name" value="Elp3/MiaA/NifB-like_rSAM"/>
</dbReference>
<dbReference type="InterPro" id="IPR007197">
    <property type="entry name" value="rSAM"/>
</dbReference>
<dbReference type="NCBIfam" id="TIGR00433">
    <property type="entry name" value="bioB"/>
    <property type="match status" value="1"/>
</dbReference>
<dbReference type="PANTHER" id="PTHR22976">
    <property type="entry name" value="BIOTIN SYNTHASE"/>
    <property type="match status" value="1"/>
</dbReference>
<dbReference type="PANTHER" id="PTHR22976:SF2">
    <property type="entry name" value="BIOTIN SYNTHASE, MITOCHONDRIAL"/>
    <property type="match status" value="1"/>
</dbReference>
<dbReference type="Pfam" id="PF06968">
    <property type="entry name" value="BATS"/>
    <property type="match status" value="1"/>
</dbReference>
<dbReference type="Pfam" id="PF04055">
    <property type="entry name" value="Radical_SAM"/>
    <property type="match status" value="1"/>
</dbReference>
<dbReference type="PIRSF" id="PIRSF001619">
    <property type="entry name" value="Biotin_synth"/>
    <property type="match status" value="1"/>
</dbReference>
<dbReference type="SFLD" id="SFLDF00272">
    <property type="entry name" value="biotin_synthase"/>
    <property type="match status" value="1"/>
</dbReference>
<dbReference type="SFLD" id="SFLDG01278">
    <property type="entry name" value="biotin_synthase_like"/>
    <property type="match status" value="1"/>
</dbReference>
<dbReference type="SMART" id="SM00876">
    <property type="entry name" value="BATS"/>
    <property type="match status" value="1"/>
</dbReference>
<dbReference type="SMART" id="SM00729">
    <property type="entry name" value="Elp3"/>
    <property type="match status" value="1"/>
</dbReference>
<dbReference type="SUPFAM" id="SSF102114">
    <property type="entry name" value="Radical SAM enzymes"/>
    <property type="match status" value="1"/>
</dbReference>
<dbReference type="PROSITE" id="PS51918">
    <property type="entry name" value="RADICAL_SAM"/>
    <property type="match status" value="1"/>
</dbReference>
<keyword id="KW-0001">2Fe-2S</keyword>
<keyword id="KW-0004">4Fe-4S</keyword>
<keyword id="KW-0093">Biotin biosynthesis</keyword>
<keyword id="KW-0408">Iron</keyword>
<keyword id="KW-0411">Iron-sulfur</keyword>
<keyword id="KW-0479">Metal-binding</keyword>
<keyword id="KW-1185">Reference proteome</keyword>
<keyword id="KW-0949">S-adenosyl-L-methionine</keyword>
<keyword id="KW-0808">Transferase</keyword>
<name>BIOB_AFIC5</name>
<sequence length="347" mass="37841">MNISMGISSLSVINGSALPRHNWAREEAQALYDLPFPDLVFQAQSIHRTSFDPNHVETASLLSIKTGGCAEDCGYCSQSAHYKTDVKATKLMAHDDVVATARRAKESGAGRFCMAAAWRNPKEKDLERICHMVSAVKELGMETCATLGMLTREQADKLRAAGLDFYNHNVDTSPEFYGKIITTRTLQDRIETLAHARESGLKVCCGGIVGLGEQVEDRLGMLVLLANLAEHPESVPINQWNEVKGVPVNATAEAPDPIAFVRMIAVARIMMPKSVVRLSAGRQYMSDEMQALCMLAGANSIFIGDVLLTTKNPQTTKDAALLERLGMTSRFDEVATDKANPVSSRAI</sequence>
<reference key="1">
    <citation type="journal article" date="2008" name="J. Bacteriol.">
        <title>Genome sequence of the chemolithoautotrophic bacterium Oligotropha carboxidovorans OM5T.</title>
        <authorList>
            <person name="Paul D."/>
            <person name="Bridges S."/>
            <person name="Burgess S.C."/>
            <person name="Dandass Y."/>
            <person name="Lawrence M.L."/>
        </authorList>
    </citation>
    <scope>NUCLEOTIDE SEQUENCE [LARGE SCALE GENOMIC DNA]</scope>
    <source>
        <strain>ATCC 49405 / DSM 1227 / KCTC 32145 / OM5</strain>
    </source>
</reference>
<reference key="2">
    <citation type="journal article" date="2011" name="J. Bacteriol.">
        <title>Complete genome sequences of the chemolithoautotrophic Oligotropha carboxidovorans strains OM4 and OM5.</title>
        <authorList>
            <person name="Volland S."/>
            <person name="Rachinger M."/>
            <person name="Strittmatter A."/>
            <person name="Daniel R."/>
            <person name="Gottschalk G."/>
            <person name="Meyer O."/>
        </authorList>
    </citation>
    <scope>NUCLEOTIDE SEQUENCE [LARGE SCALE GENOMIC DNA]</scope>
    <source>
        <strain>ATCC 49405 / DSM 1227 / KCTC 32145 / OM5</strain>
    </source>
</reference>
<comment type="function">
    <text evidence="1">Catalyzes the conversion of dethiobiotin (DTB) to biotin by the insertion of a sulfur atom into dethiobiotin via a radical-based mechanism.</text>
</comment>
<comment type="catalytic activity">
    <reaction evidence="1">
        <text>(4R,5S)-dethiobiotin + (sulfur carrier)-SH + 2 reduced [2Fe-2S]-[ferredoxin] + 2 S-adenosyl-L-methionine = (sulfur carrier)-H + biotin + 2 5'-deoxyadenosine + 2 L-methionine + 2 oxidized [2Fe-2S]-[ferredoxin]</text>
        <dbReference type="Rhea" id="RHEA:22060"/>
        <dbReference type="Rhea" id="RHEA-COMP:10000"/>
        <dbReference type="Rhea" id="RHEA-COMP:10001"/>
        <dbReference type="Rhea" id="RHEA-COMP:14737"/>
        <dbReference type="Rhea" id="RHEA-COMP:14739"/>
        <dbReference type="ChEBI" id="CHEBI:17319"/>
        <dbReference type="ChEBI" id="CHEBI:29917"/>
        <dbReference type="ChEBI" id="CHEBI:33737"/>
        <dbReference type="ChEBI" id="CHEBI:33738"/>
        <dbReference type="ChEBI" id="CHEBI:57586"/>
        <dbReference type="ChEBI" id="CHEBI:57844"/>
        <dbReference type="ChEBI" id="CHEBI:59789"/>
        <dbReference type="ChEBI" id="CHEBI:64428"/>
        <dbReference type="ChEBI" id="CHEBI:149473"/>
        <dbReference type="EC" id="2.8.1.6"/>
    </reaction>
</comment>
<comment type="cofactor">
    <cofactor evidence="1">
        <name>[4Fe-4S] cluster</name>
        <dbReference type="ChEBI" id="CHEBI:49883"/>
    </cofactor>
    <text evidence="1">Binds 1 [4Fe-4S] cluster. The cluster is coordinated with 3 cysteines and an exchangeable S-adenosyl-L-methionine.</text>
</comment>
<comment type="cofactor">
    <cofactor evidence="1">
        <name>[2Fe-2S] cluster</name>
        <dbReference type="ChEBI" id="CHEBI:190135"/>
    </cofactor>
    <text evidence="1">Binds 1 [2Fe-2S] cluster. The cluster is coordinated with 3 cysteines and 1 arginine.</text>
</comment>
<comment type="pathway">
    <text evidence="1">Cofactor biosynthesis; biotin biosynthesis; biotin from 7,8-diaminononanoate: step 2/2.</text>
</comment>
<comment type="subunit">
    <text evidence="1">Homodimer.</text>
</comment>
<comment type="similarity">
    <text evidence="1">Belongs to the radical SAM superfamily. Biotin synthase family.</text>
</comment>
<gene>
    <name evidence="1" type="primary">bioB</name>
    <name type="ordered locus">OCAR_4707</name>
    <name type="ordered locus">OCA5_c32430</name>
</gene>
<feature type="chain" id="PRO_0000381513" description="Biotin synthase">
    <location>
        <begin position="1"/>
        <end position="347"/>
    </location>
</feature>
<feature type="domain" description="Radical SAM core" evidence="2">
    <location>
        <begin position="54"/>
        <end position="273"/>
    </location>
</feature>
<feature type="binding site" evidence="1">
    <location>
        <position position="69"/>
    </location>
    <ligand>
        <name>[4Fe-4S] cluster</name>
        <dbReference type="ChEBI" id="CHEBI:49883"/>
        <note>4Fe-4S-S-AdoMet</note>
    </ligand>
</feature>
<feature type="binding site" evidence="1">
    <location>
        <position position="73"/>
    </location>
    <ligand>
        <name>[4Fe-4S] cluster</name>
        <dbReference type="ChEBI" id="CHEBI:49883"/>
        <note>4Fe-4S-S-AdoMet</note>
    </ligand>
</feature>
<feature type="binding site" evidence="1">
    <location>
        <position position="76"/>
    </location>
    <ligand>
        <name>[4Fe-4S] cluster</name>
        <dbReference type="ChEBI" id="CHEBI:49883"/>
        <note>4Fe-4S-S-AdoMet</note>
    </ligand>
</feature>
<feature type="binding site" evidence="1">
    <location>
        <position position="113"/>
    </location>
    <ligand>
        <name>[2Fe-2S] cluster</name>
        <dbReference type="ChEBI" id="CHEBI:190135"/>
    </ligand>
</feature>
<feature type="binding site" evidence="1">
    <location>
        <position position="144"/>
    </location>
    <ligand>
        <name>[2Fe-2S] cluster</name>
        <dbReference type="ChEBI" id="CHEBI:190135"/>
    </ligand>
</feature>
<feature type="binding site" evidence="1">
    <location>
        <position position="204"/>
    </location>
    <ligand>
        <name>[2Fe-2S] cluster</name>
        <dbReference type="ChEBI" id="CHEBI:190135"/>
    </ligand>
</feature>
<feature type="binding site" evidence="1">
    <location>
        <position position="277"/>
    </location>
    <ligand>
        <name>[2Fe-2S] cluster</name>
        <dbReference type="ChEBI" id="CHEBI:190135"/>
    </ligand>
</feature>
<proteinExistence type="inferred from homology"/>
<accession>B6JDD7</accession>
<accession>F8BS03</accession>
<organism>
    <name type="scientific">Afipia carboxidovorans (strain ATCC 49405 / DSM 1227 / KCTC 32145 / OM5)</name>
    <name type="common">Oligotropha carboxidovorans</name>
    <dbReference type="NCBI Taxonomy" id="504832"/>
    <lineage>
        <taxon>Bacteria</taxon>
        <taxon>Pseudomonadati</taxon>
        <taxon>Pseudomonadota</taxon>
        <taxon>Alphaproteobacteria</taxon>
        <taxon>Hyphomicrobiales</taxon>
        <taxon>Nitrobacteraceae</taxon>
        <taxon>Afipia</taxon>
    </lineage>
</organism>
<evidence type="ECO:0000255" key="1">
    <source>
        <dbReference type="HAMAP-Rule" id="MF_01694"/>
    </source>
</evidence>
<evidence type="ECO:0000255" key="2">
    <source>
        <dbReference type="PROSITE-ProRule" id="PRU01266"/>
    </source>
</evidence>